<sequence length="281" mass="32134">MALIKLARQLGLIDTIYVDGARPDPNNDPEESFNEDEVTEANSVPAKSKKSRKSKRLAMQPYSYVIAVDFEATCWEKQAPPEWREAEIIEFPAVLVNLKTGKIEAEFHQYILPFESPRLSAYCTELTGIQQKTVDSGMPLRTAIVMFNEWLRNEMRARNLTLPKMNKSNILGNCAFVTWTDWDFGICLAKECSRKGIRKPAYFNQWIDVRAIYRSWYKYRPCNFTDALSHVGLAFEGKAHSGIDDAKNLGALMCKMVRDGALFSITKDLTPYQQLNPRFVL</sequence>
<feature type="chain" id="PRO_0000457721" description="3'-5' exonuclease Snipper">
    <location>
        <begin position="1"/>
        <end position="281"/>
    </location>
</feature>
<feature type="domain" description="Exonuclease">
    <location>
        <begin position="64"/>
        <end position="262"/>
    </location>
</feature>
<feature type="region of interest" description="Disordered" evidence="2">
    <location>
        <begin position="19"/>
        <end position="52"/>
    </location>
</feature>
<feature type="compositionally biased region" description="Acidic residues" evidence="2">
    <location>
        <begin position="27"/>
        <end position="39"/>
    </location>
</feature>
<feature type="active site" description="Proton acceptor" evidence="6">
    <location>
        <position position="71"/>
    </location>
</feature>
<feature type="active site" description="Proton acceptor" evidence="6">
    <location>
        <position position="240"/>
    </location>
</feature>
<feature type="binding site" evidence="1">
    <location>
        <position position="69"/>
    </location>
    <ligand>
        <name>Mg(2+)</name>
        <dbReference type="ChEBI" id="CHEBI:18420"/>
        <label>1</label>
    </ligand>
</feature>
<feature type="binding site" evidence="1">
    <location>
        <position position="69"/>
    </location>
    <ligand>
        <name>Mg(2+)</name>
        <dbReference type="ChEBI" id="CHEBI:18420"/>
        <label>2</label>
    </ligand>
</feature>
<feature type="binding site" evidence="1">
    <location>
        <position position="71"/>
    </location>
    <ligand>
        <name>AMP</name>
        <dbReference type="ChEBI" id="CHEBI:456215"/>
    </ligand>
</feature>
<feature type="binding site" evidence="1">
    <location>
        <position position="71"/>
    </location>
    <ligand>
        <name>Mg(2+)</name>
        <dbReference type="ChEBI" id="CHEBI:18420"/>
        <label>1</label>
    </ligand>
</feature>
<feature type="binding site" evidence="1">
    <location>
        <position position="72"/>
    </location>
    <ligand>
        <name>AMP</name>
        <dbReference type="ChEBI" id="CHEBI:456215"/>
    </ligand>
</feature>
<feature type="binding site" evidence="1">
    <location>
        <position position="183"/>
    </location>
    <ligand>
        <name>Mg(2+)</name>
        <dbReference type="ChEBI" id="CHEBI:18420"/>
        <label>2</label>
    </ligand>
</feature>
<feature type="binding site" evidence="1">
    <location>
        <position position="240"/>
    </location>
    <ligand>
        <name>AMP</name>
        <dbReference type="ChEBI" id="CHEBI:456215"/>
    </ligand>
</feature>
<feature type="binding site" evidence="1">
    <location>
        <position position="245"/>
    </location>
    <ligand>
        <name>Mg(2+)</name>
        <dbReference type="ChEBI" id="CHEBI:18420"/>
        <label>1</label>
    </ligand>
</feature>
<feature type="splice variant" id="VSP_061808" description="In isoform E." evidence="6">
    <location>
        <begin position="1"/>
        <end position="58"/>
    </location>
</feature>
<dbReference type="EC" id="3.1.15.-" evidence="3"/>
<dbReference type="EMBL" id="AE013599">
    <property type="protein sequence ID" value="AAF46791.2"/>
    <property type="molecule type" value="Genomic_DNA"/>
</dbReference>
<dbReference type="EMBL" id="AE013599">
    <property type="protein sequence ID" value="AAM68201.3"/>
    <property type="molecule type" value="Genomic_DNA"/>
</dbReference>
<dbReference type="EMBL" id="AE013599">
    <property type="protein sequence ID" value="AAM68200.1"/>
    <property type="molecule type" value="Genomic_DNA"/>
</dbReference>
<dbReference type="EMBL" id="AE013599">
    <property type="protein sequence ID" value="AAM68199.2"/>
    <property type="molecule type" value="Genomic_DNA"/>
</dbReference>
<dbReference type="EMBL" id="AY061211">
    <property type="protein sequence ID" value="AAL28759.1"/>
    <property type="molecule type" value="mRNA"/>
</dbReference>
<dbReference type="EMBL" id="BT031103">
    <property type="protein sequence ID" value="ABX00725.1"/>
    <property type="status" value="ALT_SEQ"/>
    <property type="molecule type" value="mRNA"/>
</dbReference>
<dbReference type="RefSeq" id="NP_611632.3">
    <molecule id="Q95RQ4-1"/>
    <property type="nucleotide sequence ID" value="NM_137788.4"/>
</dbReference>
<dbReference type="RefSeq" id="NP_726149.1">
    <molecule id="Q95RQ4-2"/>
    <property type="nucleotide sequence ID" value="NM_166501.3"/>
</dbReference>
<dbReference type="RefSeq" id="NP_726150.1">
    <molecule id="Q95RQ4-2"/>
    <property type="nucleotide sequence ID" value="NM_166502.3"/>
</dbReference>
<dbReference type="RefSeq" id="NP_726151.3">
    <molecule id="Q95RQ4-2"/>
    <property type="nucleotide sequence ID" value="NM_166503.3"/>
</dbReference>
<dbReference type="SMR" id="Q95RQ4"/>
<dbReference type="FunCoup" id="Q95RQ4">
    <property type="interactions" value="1708"/>
</dbReference>
<dbReference type="IntAct" id="Q95RQ4">
    <property type="interactions" value="7"/>
</dbReference>
<dbReference type="STRING" id="7227.FBpp0308244"/>
<dbReference type="DNASU" id="37511"/>
<dbReference type="EnsemblMetazoa" id="FBtr0339099">
    <molecule id="Q95RQ4-1"/>
    <property type="protein sequence ID" value="FBpp0308244"/>
    <property type="gene ID" value="FBgn0265192"/>
</dbReference>
<dbReference type="EnsemblMetazoa" id="FBtr0339100">
    <molecule id="Q95RQ4-2"/>
    <property type="protein sequence ID" value="FBpp0308245"/>
    <property type="gene ID" value="FBgn0265192"/>
</dbReference>
<dbReference type="EnsemblMetazoa" id="FBtr0339101">
    <molecule id="Q95RQ4-2"/>
    <property type="protein sequence ID" value="FBpp0308246"/>
    <property type="gene ID" value="FBgn0265192"/>
</dbReference>
<dbReference type="EnsemblMetazoa" id="FBtr0339102">
    <molecule id="Q95RQ4-2"/>
    <property type="protein sequence ID" value="FBpp0308247"/>
    <property type="gene ID" value="FBgn0265192"/>
</dbReference>
<dbReference type="GeneID" id="37511"/>
<dbReference type="KEGG" id="dme:Dmel_CG44248"/>
<dbReference type="UCSC" id="CG42257-RD">
    <molecule id="Q95RQ4-1"/>
    <property type="organism name" value="d. melanogaster"/>
</dbReference>
<dbReference type="AGR" id="FB:FBgn0265192"/>
<dbReference type="CTD" id="37511"/>
<dbReference type="FlyBase" id="FBgn0265192">
    <property type="gene designation" value="Snp"/>
</dbReference>
<dbReference type="VEuPathDB" id="VectorBase:FBgn0265192"/>
<dbReference type="GeneTree" id="ENSGT00530000063205"/>
<dbReference type="HOGENOM" id="CLU_037266_4_0_1"/>
<dbReference type="InParanoid" id="Q95RQ4"/>
<dbReference type="OMA" id="CRELTHI"/>
<dbReference type="OrthoDB" id="448399at2759"/>
<dbReference type="BioGRID-ORCS" id="37511">
    <property type="hits" value="0 hits in 3 CRISPR screens"/>
</dbReference>
<dbReference type="GenomeRNAi" id="37511"/>
<dbReference type="PRO" id="PR:Q95RQ4"/>
<dbReference type="Proteomes" id="UP000000803">
    <property type="component" value="Chromosome 2R"/>
</dbReference>
<dbReference type="Bgee" id="FBgn0265192">
    <property type="expression patterns" value="Expressed in optic-lobe-associated cortex glial cell in insect head and 226 other cell types or tissues"/>
</dbReference>
<dbReference type="ExpressionAtlas" id="Q95RQ4">
    <property type="expression patterns" value="baseline and differential"/>
</dbReference>
<dbReference type="GO" id="GO:0005737">
    <property type="term" value="C:cytoplasm"/>
    <property type="evidence" value="ECO:0007669"/>
    <property type="project" value="UniProtKB-SubCell"/>
</dbReference>
<dbReference type="GO" id="GO:0005730">
    <property type="term" value="C:nucleolus"/>
    <property type="evidence" value="ECO:0007669"/>
    <property type="project" value="UniProtKB-SubCell"/>
</dbReference>
<dbReference type="GO" id="GO:0000175">
    <property type="term" value="F:3'-5'-RNA exonuclease activity"/>
    <property type="evidence" value="ECO:0000314"/>
    <property type="project" value="FlyBase"/>
</dbReference>
<dbReference type="GO" id="GO:0008311">
    <property type="term" value="F:double-stranded DNA 3'-5' DNA exonuclease activity"/>
    <property type="evidence" value="ECO:0000314"/>
    <property type="project" value="FlyBase"/>
</dbReference>
<dbReference type="GO" id="GO:0046872">
    <property type="term" value="F:metal ion binding"/>
    <property type="evidence" value="ECO:0007669"/>
    <property type="project" value="UniProtKB-KW"/>
</dbReference>
<dbReference type="GO" id="GO:0003676">
    <property type="term" value="F:nucleic acid binding"/>
    <property type="evidence" value="ECO:0007669"/>
    <property type="project" value="InterPro"/>
</dbReference>
<dbReference type="GO" id="GO:0008310">
    <property type="term" value="F:single-stranded DNA 3'-5' DNA exonuclease activity"/>
    <property type="evidence" value="ECO:0000314"/>
    <property type="project" value="FlyBase"/>
</dbReference>
<dbReference type="CDD" id="cd06133">
    <property type="entry name" value="ERI-1_3'hExo_like"/>
    <property type="match status" value="1"/>
</dbReference>
<dbReference type="FunFam" id="3.30.420.10:FF:000169">
    <property type="entry name" value="Snipper, isoform E"/>
    <property type="match status" value="1"/>
</dbReference>
<dbReference type="Gene3D" id="3.30.420.10">
    <property type="entry name" value="Ribonuclease H-like superfamily/Ribonuclease H"/>
    <property type="match status" value="1"/>
</dbReference>
<dbReference type="InterPro" id="IPR051274">
    <property type="entry name" value="3-5_Exoribonuclease"/>
</dbReference>
<dbReference type="InterPro" id="IPR047201">
    <property type="entry name" value="ERI-1_3'hExo-like"/>
</dbReference>
<dbReference type="InterPro" id="IPR013520">
    <property type="entry name" value="Exonuclease_RNaseT/DNA_pol3"/>
</dbReference>
<dbReference type="InterPro" id="IPR012337">
    <property type="entry name" value="RNaseH-like_sf"/>
</dbReference>
<dbReference type="InterPro" id="IPR036397">
    <property type="entry name" value="RNaseH_sf"/>
</dbReference>
<dbReference type="PANTHER" id="PTHR23044">
    <property type="entry name" value="3'-5' EXONUCLEASE ERI1-RELATED"/>
    <property type="match status" value="1"/>
</dbReference>
<dbReference type="PANTHER" id="PTHR23044:SF61">
    <property type="entry name" value="3'-5' EXORIBONUCLEASE 1-RELATED"/>
    <property type="match status" value="1"/>
</dbReference>
<dbReference type="Pfam" id="PF00929">
    <property type="entry name" value="RNase_T"/>
    <property type="match status" value="1"/>
</dbReference>
<dbReference type="SMART" id="SM00479">
    <property type="entry name" value="EXOIII"/>
    <property type="match status" value="1"/>
</dbReference>
<dbReference type="SUPFAM" id="SSF53098">
    <property type="entry name" value="Ribonuclease H-like"/>
    <property type="match status" value="1"/>
</dbReference>
<protein>
    <recommendedName>
        <fullName evidence="5 9">3'-5' exonuclease Snipper</fullName>
        <ecNumber evidence="3">3.1.15.-</ecNumber>
    </recommendedName>
    <alternativeName>
        <fullName evidence="6">ERI1 exoribonuclease 2</fullName>
    </alternativeName>
</protein>
<keyword id="KW-0025">Alternative splicing</keyword>
<keyword id="KW-0963">Cytoplasm</keyword>
<keyword id="KW-0269">Exonuclease</keyword>
<keyword id="KW-0378">Hydrolase</keyword>
<keyword id="KW-0460">Magnesium</keyword>
<keyword id="KW-0479">Metal-binding</keyword>
<keyword id="KW-0540">Nuclease</keyword>
<keyword id="KW-0539">Nucleus</keyword>
<keyword id="KW-1185">Reference proteome</keyword>
<name>ERI2_DROME</name>
<evidence type="ECO:0000250" key="1">
    <source>
        <dbReference type="UniProtKB" id="Q8IV48"/>
    </source>
</evidence>
<evidence type="ECO:0000256" key="2">
    <source>
        <dbReference type="SAM" id="MobiDB-lite"/>
    </source>
</evidence>
<evidence type="ECO:0000269" key="3">
    <source>
    </source>
</evidence>
<evidence type="ECO:0000269" key="4">
    <source>
    </source>
</evidence>
<evidence type="ECO:0000303" key="5">
    <source>
    </source>
</evidence>
<evidence type="ECO:0000305" key="6"/>
<evidence type="ECO:0000312" key="7">
    <source>
        <dbReference type="EMBL" id="AAL28759.1"/>
    </source>
</evidence>
<evidence type="ECO:0000312" key="8">
    <source>
        <dbReference type="EMBL" id="ABX00725.1"/>
    </source>
</evidence>
<evidence type="ECO:0000312" key="9">
    <source>
        <dbReference type="FlyBase" id="FBgn0265192"/>
    </source>
</evidence>
<evidence type="ECO:0000312" key="10">
    <source>
        <dbReference type="Proteomes" id="UP000000803"/>
    </source>
</evidence>
<comment type="function">
    <text evidence="3 4">A broad-specificity exonuclease, capable of degrading both structure-specific DNA and RNA targets without sequence specificity in vitro (PubMed:17135487). Requires two to five unpaired nucleotides in the 3' region for efficient binding and nuclease activity (PubMed:17135487). Binds with higher affinity to RNA and DNA stem-loop substrates compared to single-stranded substrate (PubMed:17135487). Binds to the 3'-end of histone mRNAs and degrades them, suggesting that it might play a role in histone mRNA decay after replication (PubMed:17135487). Can readily cleave the histone stem-loop RNA beyond the -12 (UUU) position in the loop to produce -14 and then -16 oligonucleotide fragments for both the stem-loop and the reverse stem-loop (PubMed:17135487). Cleaves both the single-stranded 3' flank as well as the double-stranded stem portion of histone stem-loop RNA (PubMed:17135487). Might affect histone mRNA 3' processing thereby regulating histone protein expression (PubMed:28626879). Has an important role in development and tissue formation (PubMed:28626879). Might have a role in 5.8S rRNA precursor processing (PubMed:28626879).</text>
</comment>
<comment type="cofactor">
    <cofactor evidence="3">
        <name>Mg(2+)</name>
        <dbReference type="ChEBI" id="CHEBI:18420"/>
    </cofactor>
    <text evidence="1">Binds 2 magnesium ions per subunit.</text>
</comment>
<comment type="biophysicochemical properties">
    <temperatureDependence>
        <text evidence="3">Optimum temperature is 37 degrees Celsius.</text>
    </temperatureDependence>
</comment>
<comment type="subcellular location">
    <subcellularLocation>
        <location evidence="1">Cytoplasm</location>
    </subcellularLocation>
    <subcellularLocation>
        <location evidence="1">Nucleus</location>
    </subcellularLocation>
    <subcellularLocation>
        <location evidence="1">Nucleus</location>
        <location evidence="1">Nucleolus</location>
    </subcellularLocation>
</comment>
<comment type="alternative products">
    <event type="alternative splicing"/>
    <isoform>
        <id>Q95RQ4-1</id>
        <name evidence="9">D</name>
        <sequence type="displayed"/>
    </isoform>
    <isoform>
        <id>Q95RQ4-2</id>
        <name evidence="9">E</name>
        <name evidence="9">F</name>
        <name evidence="9">G</name>
        <sequence type="described" ref="VSP_061808"/>
    </isoform>
</comment>
<comment type="developmental stage">
    <text evidence="4">Abundant in early embryos as maternally provided but levels decline in later stages (PubMed:28626879). Ubiquitously present in developing embryos (PubMed:28626879). Higher levels of expression in female ovaries (PubMed:28626879).</text>
</comment>
<comment type="disruption phenotype">
    <text evidence="4">Results in normal embryogenesis but animals remain in the L1 larval stage until death 4 days later (PubMed:28626879). Results in altered histone mRNA 3' processing and ultimately levels of histone protein expression (PubMed:28626879). RNAi-mediated knockdown results in lack of adult flies since all die as pharate adults; the animals seems completely normal except for their abdomen, which is undifferentiated lacking the characteristic pigmentation and bristles (PubMed:28626879). RNAi-mediated knockdown in the eye results in a variety of phenotypes with different intensity like perturbation of normal ommatidia arrangement, small lesions in the middle of the eye, duplicated or extra bristles, and adventitious antennae like structures (PubMed:28626879). RNAi-mediated knockdown in the midthorax leads to malformed thoraces with reduced scutellum, a prominent groove at the midline indicative of defective hemithorax fusion and abnormal micro and macrochaetae (PubMed:28626879). RNAi-mediated knockdown in the wings results in the production of ectopic vein material close to the wing margin (PubMed:28626879).</text>
</comment>
<comment type="similarity">
    <text evidence="6">Belongs to the ERI2 family.</text>
</comment>
<comment type="sequence caution" evidence="6">
    <conflict type="miscellaneous discrepancy">
        <sequence resource="EMBL-CDS" id="ABX00725"/>
    </conflict>
    <text>Probable cloning artifact.</text>
</comment>
<reference evidence="10" key="1">
    <citation type="journal article" date="2000" name="Science">
        <title>The genome sequence of Drosophila melanogaster.</title>
        <authorList>
            <person name="Adams M.D."/>
            <person name="Celniker S.E."/>
            <person name="Holt R.A."/>
            <person name="Evans C.A."/>
            <person name="Gocayne J.D."/>
            <person name="Amanatides P.G."/>
            <person name="Scherer S.E."/>
            <person name="Li P.W."/>
            <person name="Hoskins R.A."/>
            <person name="Galle R.F."/>
            <person name="George R.A."/>
            <person name="Lewis S.E."/>
            <person name="Richards S."/>
            <person name="Ashburner M."/>
            <person name="Henderson S.N."/>
            <person name="Sutton G.G."/>
            <person name="Wortman J.R."/>
            <person name="Yandell M.D."/>
            <person name="Zhang Q."/>
            <person name="Chen L.X."/>
            <person name="Brandon R.C."/>
            <person name="Rogers Y.-H.C."/>
            <person name="Blazej R.G."/>
            <person name="Champe M."/>
            <person name="Pfeiffer B.D."/>
            <person name="Wan K.H."/>
            <person name="Doyle C."/>
            <person name="Baxter E.G."/>
            <person name="Helt G."/>
            <person name="Nelson C.R."/>
            <person name="Miklos G.L.G."/>
            <person name="Abril J.F."/>
            <person name="Agbayani A."/>
            <person name="An H.-J."/>
            <person name="Andrews-Pfannkoch C."/>
            <person name="Baldwin D."/>
            <person name="Ballew R.M."/>
            <person name="Basu A."/>
            <person name="Baxendale J."/>
            <person name="Bayraktaroglu L."/>
            <person name="Beasley E.M."/>
            <person name="Beeson K.Y."/>
            <person name="Benos P.V."/>
            <person name="Berman B.P."/>
            <person name="Bhandari D."/>
            <person name="Bolshakov S."/>
            <person name="Borkova D."/>
            <person name="Botchan M.R."/>
            <person name="Bouck J."/>
            <person name="Brokstein P."/>
            <person name="Brottier P."/>
            <person name="Burtis K.C."/>
            <person name="Busam D.A."/>
            <person name="Butler H."/>
            <person name="Cadieu E."/>
            <person name="Center A."/>
            <person name="Chandra I."/>
            <person name="Cherry J.M."/>
            <person name="Cawley S."/>
            <person name="Dahlke C."/>
            <person name="Davenport L.B."/>
            <person name="Davies P."/>
            <person name="de Pablos B."/>
            <person name="Delcher A."/>
            <person name="Deng Z."/>
            <person name="Mays A.D."/>
            <person name="Dew I."/>
            <person name="Dietz S.M."/>
            <person name="Dodson K."/>
            <person name="Doup L.E."/>
            <person name="Downes M."/>
            <person name="Dugan-Rocha S."/>
            <person name="Dunkov B.C."/>
            <person name="Dunn P."/>
            <person name="Durbin K.J."/>
            <person name="Evangelista C.C."/>
            <person name="Ferraz C."/>
            <person name="Ferriera S."/>
            <person name="Fleischmann W."/>
            <person name="Fosler C."/>
            <person name="Gabrielian A.E."/>
            <person name="Garg N.S."/>
            <person name="Gelbart W.M."/>
            <person name="Glasser K."/>
            <person name="Glodek A."/>
            <person name="Gong F."/>
            <person name="Gorrell J.H."/>
            <person name="Gu Z."/>
            <person name="Guan P."/>
            <person name="Harris M."/>
            <person name="Harris N.L."/>
            <person name="Harvey D.A."/>
            <person name="Heiman T.J."/>
            <person name="Hernandez J.R."/>
            <person name="Houck J."/>
            <person name="Hostin D."/>
            <person name="Houston K.A."/>
            <person name="Howland T.J."/>
            <person name="Wei M.-H."/>
            <person name="Ibegwam C."/>
            <person name="Jalali M."/>
            <person name="Kalush F."/>
            <person name="Karpen G.H."/>
            <person name="Ke Z."/>
            <person name="Kennison J.A."/>
            <person name="Ketchum K.A."/>
            <person name="Kimmel B.E."/>
            <person name="Kodira C.D."/>
            <person name="Kraft C.L."/>
            <person name="Kravitz S."/>
            <person name="Kulp D."/>
            <person name="Lai Z."/>
            <person name="Lasko P."/>
            <person name="Lei Y."/>
            <person name="Levitsky A.A."/>
            <person name="Li J.H."/>
            <person name="Li Z."/>
            <person name="Liang Y."/>
            <person name="Lin X."/>
            <person name="Liu X."/>
            <person name="Mattei B."/>
            <person name="McIntosh T.C."/>
            <person name="McLeod M.P."/>
            <person name="McPherson D."/>
            <person name="Merkulov G."/>
            <person name="Milshina N.V."/>
            <person name="Mobarry C."/>
            <person name="Morris J."/>
            <person name="Moshrefi A."/>
            <person name="Mount S.M."/>
            <person name="Moy M."/>
            <person name="Murphy B."/>
            <person name="Murphy L."/>
            <person name="Muzny D.M."/>
            <person name="Nelson D.L."/>
            <person name="Nelson D.R."/>
            <person name="Nelson K.A."/>
            <person name="Nixon K."/>
            <person name="Nusskern D.R."/>
            <person name="Pacleb J.M."/>
            <person name="Palazzolo M."/>
            <person name="Pittman G.S."/>
            <person name="Pan S."/>
            <person name="Pollard J."/>
            <person name="Puri V."/>
            <person name="Reese M.G."/>
            <person name="Reinert K."/>
            <person name="Remington K."/>
            <person name="Saunders R.D.C."/>
            <person name="Scheeler F."/>
            <person name="Shen H."/>
            <person name="Shue B.C."/>
            <person name="Siden-Kiamos I."/>
            <person name="Simpson M."/>
            <person name="Skupski M.P."/>
            <person name="Smith T.J."/>
            <person name="Spier E."/>
            <person name="Spradling A.C."/>
            <person name="Stapleton M."/>
            <person name="Strong R."/>
            <person name="Sun E."/>
            <person name="Svirskas R."/>
            <person name="Tector C."/>
            <person name="Turner R."/>
            <person name="Venter E."/>
            <person name="Wang A.H."/>
            <person name="Wang X."/>
            <person name="Wang Z.-Y."/>
            <person name="Wassarman D.A."/>
            <person name="Weinstock G.M."/>
            <person name="Weissenbach J."/>
            <person name="Williams S.M."/>
            <person name="Woodage T."/>
            <person name="Worley K.C."/>
            <person name="Wu D."/>
            <person name="Yang S."/>
            <person name="Yao Q.A."/>
            <person name="Ye J."/>
            <person name="Yeh R.-F."/>
            <person name="Zaveri J.S."/>
            <person name="Zhan M."/>
            <person name="Zhang G."/>
            <person name="Zhao Q."/>
            <person name="Zheng L."/>
            <person name="Zheng X.H."/>
            <person name="Zhong F.N."/>
            <person name="Zhong W."/>
            <person name="Zhou X."/>
            <person name="Zhu S.C."/>
            <person name="Zhu X."/>
            <person name="Smith H.O."/>
            <person name="Gibbs R.A."/>
            <person name="Myers E.W."/>
            <person name="Rubin G.M."/>
            <person name="Venter J.C."/>
        </authorList>
    </citation>
    <scope>NUCLEOTIDE SEQUENCE [LARGE SCALE GENOMIC DNA]</scope>
    <source>
        <strain evidence="10">Berkeley</strain>
    </source>
</reference>
<reference evidence="10" key="2">
    <citation type="journal article" date="2002" name="Genome Biol.">
        <title>Annotation of the Drosophila melanogaster euchromatic genome: a systematic review.</title>
        <authorList>
            <person name="Misra S."/>
            <person name="Crosby M.A."/>
            <person name="Mungall C.J."/>
            <person name="Matthews B.B."/>
            <person name="Campbell K.S."/>
            <person name="Hradecky P."/>
            <person name="Huang Y."/>
            <person name="Kaminker J.S."/>
            <person name="Millburn G.H."/>
            <person name="Prochnik S.E."/>
            <person name="Smith C.D."/>
            <person name="Tupy J.L."/>
            <person name="Whitfield E.J."/>
            <person name="Bayraktaroglu L."/>
            <person name="Berman B.P."/>
            <person name="Bettencourt B.R."/>
            <person name="Celniker S.E."/>
            <person name="de Grey A.D.N.J."/>
            <person name="Drysdale R.A."/>
            <person name="Harris N.L."/>
            <person name="Richter J."/>
            <person name="Russo S."/>
            <person name="Schroeder A.J."/>
            <person name="Shu S.Q."/>
            <person name="Stapleton M."/>
            <person name="Yamada C."/>
            <person name="Ashburner M."/>
            <person name="Gelbart W.M."/>
            <person name="Rubin G.M."/>
            <person name="Lewis S.E."/>
        </authorList>
    </citation>
    <scope>GENOME REANNOTATION</scope>
    <source>
        <strain evidence="10">Berkeley</strain>
    </source>
</reference>
<reference evidence="7" key="3">
    <citation type="journal article" date="2002" name="Genome Biol.">
        <title>A Drosophila full-length cDNA resource.</title>
        <authorList>
            <person name="Stapleton M."/>
            <person name="Carlson J.W."/>
            <person name="Brokstein P."/>
            <person name="Yu C."/>
            <person name="Champe M."/>
            <person name="George R.A."/>
            <person name="Guarin H."/>
            <person name="Kronmiller B."/>
            <person name="Pacleb J.M."/>
            <person name="Park S."/>
            <person name="Wan K.H."/>
            <person name="Rubin G.M."/>
            <person name="Celniker S.E."/>
        </authorList>
    </citation>
    <scope>NUCLEOTIDE SEQUENCE [LARGE SCALE MRNA]</scope>
    <source>
        <strain evidence="7">Berkeley</strain>
        <tissue evidence="7">Embryo</tissue>
    </source>
</reference>
<reference evidence="8" key="4">
    <citation type="submission" date="2007-11" db="EMBL/GenBank/DDBJ databases">
        <authorList>
            <person name="Stapleton M."/>
            <person name="Carlson J."/>
            <person name="Frise E."/>
            <person name="Kapadia B."/>
            <person name="Park S."/>
            <person name="Wan K."/>
            <person name="Yu C."/>
            <person name="Celniker S."/>
        </authorList>
    </citation>
    <scope>NUCLEOTIDE SEQUENCE [LARGE SCALE MRNA]</scope>
</reference>
<reference evidence="6" key="5">
    <citation type="journal article" date="2006" name="RNA">
        <title>Genetic and biochemical characterization of Drosophila Snipper: A promiscuous member of the metazoan 3'hExo/ERI-1 family of 3' to 5' exonucleases.</title>
        <authorList>
            <person name="Kupsco J.M."/>
            <person name="Wu M.J."/>
            <person name="Marzluff W.F."/>
            <person name="Thapar R."/>
            <person name="Duronio R.J."/>
        </authorList>
    </citation>
    <scope>FUNCTION</scope>
    <scope>CATALYTIC ACTIVITY</scope>
    <scope>COFACTOR</scope>
    <scope>BIOPHYSICOCHEMICAL PROPERTIES</scope>
</reference>
<reference evidence="6" key="6">
    <citation type="journal article" date="2017" name="FEBS Lett.">
        <title>Snipper, an Eri1 homologue, affects histone mRNA abundance and is crucial for normal Drosophila melanogaster development.</title>
        <authorList>
            <person name="Alexiadis A."/>
            <person name="Delidakis C."/>
            <person name="Kalantidis K."/>
        </authorList>
    </citation>
    <scope>FUNCTION</scope>
    <scope>DEVELOPMENTAL STAGE</scope>
    <scope>DISRUPTION PHENOTYPE</scope>
</reference>
<proteinExistence type="evidence at protein level"/>
<gene>
    <name evidence="9" type="primary">Snp</name>
    <name evidence="5" type="synonym">CG6393</name>
    <name evidence="9" type="ORF">CG44248</name>
</gene>
<organism evidence="10">
    <name type="scientific">Drosophila melanogaster</name>
    <name type="common">Fruit fly</name>
    <dbReference type="NCBI Taxonomy" id="7227"/>
    <lineage>
        <taxon>Eukaryota</taxon>
        <taxon>Metazoa</taxon>
        <taxon>Ecdysozoa</taxon>
        <taxon>Arthropoda</taxon>
        <taxon>Hexapoda</taxon>
        <taxon>Insecta</taxon>
        <taxon>Pterygota</taxon>
        <taxon>Neoptera</taxon>
        <taxon>Endopterygota</taxon>
        <taxon>Diptera</taxon>
        <taxon>Brachycera</taxon>
        <taxon>Muscomorpha</taxon>
        <taxon>Ephydroidea</taxon>
        <taxon>Drosophilidae</taxon>
        <taxon>Drosophila</taxon>
        <taxon>Sophophora</taxon>
    </lineage>
</organism>
<accession>Q95RQ4</accession>
<accession>A8WHF7</accession>
<accession>Q9W2A1</accession>